<protein>
    <recommendedName>
        <fullName evidence="1">Small ribosomal subunit protein uS15</fullName>
    </recommendedName>
    <alternativeName>
        <fullName evidence="2">30S ribosomal protein S15</fullName>
    </alternativeName>
</protein>
<gene>
    <name evidence="1" type="primary">rpsO</name>
    <name type="ordered locus">TRQ2_1485</name>
</gene>
<dbReference type="EMBL" id="CP000969">
    <property type="protein sequence ID" value="ACB09829.1"/>
    <property type="molecule type" value="Genomic_DNA"/>
</dbReference>
<dbReference type="SMR" id="B1LBY1"/>
<dbReference type="KEGG" id="trq:TRQ2_1485"/>
<dbReference type="HOGENOM" id="CLU_148518_0_0_0"/>
<dbReference type="Proteomes" id="UP000001687">
    <property type="component" value="Chromosome"/>
</dbReference>
<dbReference type="GO" id="GO:0022627">
    <property type="term" value="C:cytosolic small ribosomal subunit"/>
    <property type="evidence" value="ECO:0007669"/>
    <property type="project" value="TreeGrafter"/>
</dbReference>
<dbReference type="GO" id="GO:0019843">
    <property type="term" value="F:rRNA binding"/>
    <property type="evidence" value="ECO:0007669"/>
    <property type="project" value="UniProtKB-UniRule"/>
</dbReference>
<dbReference type="GO" id="GO:0003735">
    <property type="term" value="F:structural constituent of ribosome"/>
    <property type="evidence" value="ECO:0007669"/>
    <property type="project" value="InterPro"/>
</dbReference>
<dbReference type="GO" id="GO:0006412">
    <property type="term" value="P:translation"/>
    <property type="evidence" value="ECO:0007669"/>
    <property type="project" value="UniProtKB-UniRule"/>
</dbReference>
<dbReference type="CDD" id="cd00353">
    <property type="entry name" value="Ribosomal_S15p_S13e"/>
    <property type="match status" value="1"/>
</dbReference>
<dbReference type="FunFam" id="1.10.287.10:FF:000002">
    <property type="entry name" value="30S ribosomal protein S15"/>
    <property type="match status" value="1"/>
</dbReference>
<dbReference type="Gene3D" id="6.10.250.3130">
    <property type="match status" value="1"/>
</dbReference>
<dbReference type="Gene3D" id="1.10.287.10">
    <property type="entry name" value="S15/NS1, RNA-binding"/>
    <property type="match status" value="1"/>
</dbReference>
<dbReference type="HAMAP" id="MF_01343_B">
    <property type="entry name" value="Ribosomal_uS15_B"/>
    <property type="match status" value="1"/>
</dbReference>
<dbReference type="InterPro" id="IPR000589">
    <property type="entry name" value="Ribosomal_uS15"/>
</dbReference>
<dbReference type="InterPro" id="IPR005290">
    <property type="entry name" value="Ribosomal_uS15_bac-type"/>
</dbReference>
<dbReference type="InterPro" id="IPR009068">
    <property type="entry name" value="uS15_NS1_RNA-bd_sf"/>
</dbReference>
<dbReference type="NCBIfam" id="TIGR00952">
    <property type="entry name" value="S15_bact"/>
    <property type="match status" value="1"/>
</dbReference>
<dbReference type="PANTHER" id="PTHR23321">
    <property type="entry name" value="RIBOSOMAL PROTEIN S15, BACTERIAL AND ORGANELLAR"/>
    <property type="match status" value="1"/>
</dbReference>
<dbReference type="PANTHER" id="PTHR23321:SF26">
    <property type="entry name" value="SMALL RIBOSOMAL SUBUNIT PROTEIN US15M"/>
    <property type="match status" value="1"/>
</dbReference>
<dbReference type="Pfam" id="PF00312">
    <property type="entry name" value="Ribosomal_S15"/>
    <property type="match status" value="1"/>
</dbReference>
<dbReference type="SMART" id="SM01387">
    <property type="entry name" value="Ribosomal_S15"/>
    <property type="match status" value="1"/>
</dbReference>
<dbReference type="SUPFAM" id="SSF47060">
    <property type="entry name" value="S15/NS1 RNA-binding domain"/>
    <property type="match status" value="1"/>
</dbReference>
<dbReference type="PROSITE" id="PS00362">
    <property type="entry name" value="RIBOSOMAL_S15"/>
    <property type="match status" value="1"/>
</dbReference>
<comment type="function">
    <text evidence="1">One of the primary rRNA binding proteins, it binds directly to 16S rRNA where it helps nucleate assembly of the platform of the 30S subunit by binding and bridging several RNA helices of the 16S rRNA.</text>
</comment>
<comment type="function">
    <text evidence="1">Forms an intersubunit bridge (bridge B4) with the 23S rRNA of the 50S subunit in the ribosome.</text>
</comment>
<comment type="subunit">
    <text evidence="1">Part of the 30S ribosomal subunit. Forms a bridge to the 50S subunit in the 70S ribosome, contacting the 23S rRNA.</text>
</comment>
<comment type="similarity">
    <text evidence="1">Belongs to the universal ribosomal protein uS15 family.</text>
</comment>
<sequence>MVSLDPEKKNEIIKEFQIHENDTGSVEVQIALLTARIKHLTEHLRKHPKDFHSRRGLMKMIGRRRKMLKYLRHKKPEVYRELIAKLGIRK</sequence>
<name>RS15_THESQ</name>
<organism>
    <name type="scientific">Thermotoga sp. (strain RQ2)</name>
    <dbReference type="NCBI Taxonomy" id="126740"/>
    <lineage>
        <taxon>Bacteria</taxon>
        <taxon>Thermotogati</taxon>
        <taxon>Thermotogota</taxon>
        <taxon>Thermotogae</taxon>
        <taxon>Thermotogales</taxon>
        <taxon>Thermotogaceae</taxon>
        <taxon>Thermotoga</taxon>
    </lineage>
</organism>
<proteinExistence type="inferred from homology"/>
<evidence type="ECO:0000255" key="1">
    <source>
        <dbReference type="HAMAP-Rule" id="MF_01343"/>
    </source>
</evidence>
<evidence type="ECO:0000305" key="2"/>
<reference key="1">
    <citation type="journal article" date="2011" name="J. Bacteriol.">
        <title>Genome sequence of Thermotoga sp. strain RQ2, a hyperthermophilic bacterium isolated from a geothermally heated region of the seafloor near Ribeira Quente, the Azores.</title>
        <authorList>
            <person name="Swithers K.S."/>
            <person name="DiPippo J.L."/>
            <person name="Bruce D.C."/>
            <person name="Detter C."/>
            <person name="Tapia R."/>
            <person name="Han S."/>
            <person name="Saunders E."/>
            <person name="Goodwin L.A."/>
            <person name="Han J."/>
            <person name="Woyke T."/>
            <person name="Pitluck S."/>
            <person name="Pennacchio L."/>
            <person name="Nolan M."/>
            <person name="Mikhailova N."/>
            <person name="Lykidis A."/>
            <person name="Land M.L."/>
            <person name="Brettin T."/>
            <person name="Stetter K.O."/>
            <person name="Nelson K.E."/>
            <person name="Gogarten J.P."/>
            <person name="Noll K.M."/>
        </authorList>
    </citation>
    <scope>NUCLEOTIDE SEQUENCE [LARGE SCALE GENOMIC DNA]</scope>
    <source>
        <strain>RQ2</strain>
    </source>
</reference>
<feature type="chain" id="PRO_1000143185" description="Small ribosomal subunit protein uS15">
    <location>
        <begin position="1"/>
        <end position="90"/>
    </location>
</feature>
<keyword id="KW-0687">Ribonucleoprotein</keyword>
<keyword id="KW-0689">Ribosomal protein</keyword>
<keyword id="KW-0694">RNA-binding</keyword>
<keyword id="KW-0699">rRNA-binding</keyword>
<accession>B1LBY1</accession>